<comment type="function">
    <text evidence="1">Directly regulates filament dynamics and has been implicated in a number of complex developmental and morphological processes, including mRNA localization and the establishment of cell polarity.</text>
</comment>
<comment type="subunit">
    <text evidence="1">Homodimer. Binds actin monomers (By similarity).</text>
</comment>
<comment type="subcellular location">
    <subcellularLocation>
        <location evidence="1">Cell membrane</location>
        <topology evidence="1">Peripheral membrane protein</topology>
    </subcellularLocation>
</comment>
<comment type="similarity">
    <text evidence="6">Belongs to the CAP family.</text>
</comment>
<name>CAP1_PONAB</name>
<evidence type="ECO:0000250" key="1"/>
<evidence type="ECO:0000250" key="2">
    <source>
        <dbReference type="UniProtKB" id="P40124"/>
    </source>
</evidence>
<evidence type="ECO:0000250" key="3">
    <source>
        <dbReference type="UniProtKB" id="Q01518"/>
    </source>
</evidence>
<evidence type="ECO:0000255" key="4">
    <source>
        <dbReference type="PROSITE-ProRule" id="PRU00659"/>
    </source>
</evidence>
<evidence type="ECO:0000256" key="5">
    <source>
        <dbReference type="SAM" id="MobiDB-lite"/>
    </source>
</evidence>
<evidence type="ECO:0000305" key="6"/>
<dbReference type="EMBL" id="CR859839">
    <property type="protein sequence ID" value="CAH91996.1"/>
    <property type="molecule type" value="mRNA"/>
</dbReference>
<dbReference type="RefSeq" id="NP_001126158.1">
    <property type="nucleotide sequence ID" value="NM_001132686.1"/>
</dbReference>
<dbReference type="SMR" id="Q5R8B4"/>
<dbReference type="FunCoup" id="Q5R8B4">
    <property type="interactions" value="1485"/>
</dbReference>
<dbReference type="STRING" id="9601.ENSPPYP00000001729"/>
<dbReference type="GeneID" id="100173118"/>
<dbReference type="KEGG" id="pon:100173118"/>
<dbReference type="CTD" id="10487"/>
<dbReference type="eggNOG" id="KOG2675">
    <property type="taxonomic scope" value="Eukaryota"/>
</dbReference>
<dbReference type="InParanoid" id="Q5R8B4"/>
<dbReference type="OrthoDB" id="1601at2759"/>
<dbReference type="Proteomes" id="UP000001595">
    <property type="component" value="Unplaced"/>
</dbReference>
<dbReference type="GO" id="GO:0005737">
    <property type="term" value="C:cytoplasm"/>
    <property type="evidence" value="ECO:0007669"/>
    <property type="project" value="TreeGrafter"/>
</dbReference>
<dbReference type="GO" id="GO:0005886">
    <property type="term" value="C:plasma membrane"/>
    <property type="evidence" value="ECO:0007669"/>
    <property type="project" value="UniProtKB-SubCell"/>
</dbReference>
<dbReference type="GO" id="GO:0003779">
    <property type="term" value="F:actin binding"/>
    <property type="evidence" value="ECO:0007669"/>
    <property type="project" value="UniProtKB-KW"/>
</dbReference>
<dbReference type="GO" id="GO:0008179">
    <property type="term" value="F:adenylate cyclase binding"/>
    <property type="evidence" value="ECO:0007669"/>
    <property type="project" value="TreeGrafter"/>
</dbReference>
<dbReference type="GO" id="GO:0007015">
    <property type="term" value="P:actin filament organization"/>
    <property type="evidence" value="ECO:0007669"/>
    <property type="project" value="TreeGrafter"/>
</dbReference>
<dbReference type="GO" id="GO:0019933">
    <property type="term" value="P:cAMP-mediated signaling"/>
    <property type="evidence" value="ECO:0007669"/>
    <property type="project" value="TreeGrafter"/>
</dbReference>
<dbReference type="GO" id="GO:0000902">
    <property type="term" value="P:cell morphogenesis"/>
    <property type="evidence" value="ECO:0007669"/>
    <property type="project" value="TreeGrafter"/>
</dbReference>
<dbReference type="FunFam" id="1.25.40.330:FF:000001">
    <property type="entry name" value="Adenylyl cyclase-associated protein"/>
    <property type="match status" value="1"/>
</dbReference>
<dbReference type="FunFam" id="2.160.20.70:FF:000001">
    <property type="entry name" value="Adenylyl cyclase-associated protein"/>
    <property type="match status" value="1"/>
</dbReference>
<dbReference type="Gene3D" id="2.160.20.70">
    <property type="match status" value="1"/>
</dbReference>
<dbReference type="Gene3D" id="1.25.40.330">
    <property type="entry name" value="Adenylate cyclase-associated CAP, N-terminal domain"/>
    <property type="match status" value="1"/>
</dbReference>
<dbReference type="InterPro" id="IPR001837">
    <property type="entry name" value="Adenylate_cyclase-assoc_CAP"/>
</dbReference>
<dbReference type="InterPro" id="IPR013912">
    <property type="entry name" value="Adenylate_cyclase-assoc_CAP_C"/>
</dbReference>
<dbReference type="InterPro" id="IPR013992">
    <property type="entry name" value="Adenylate_cyclase-assoc_CAP_N"/>
</dbReference>
<dbReference type="InterPro" id="IPR017901">
    <property type="entry name" value="C-CAP_CF_C-like"/>
</dbReference>
<dbReference type="InterPro" id="IPR016098">
    <property type="entry name" value="CAP/MinC_C"/>
</dbReference>
<dbReference type="InterPro" id="IPR036223">
    <property type="entry name" value="CAP_C_sf"/>
</dbReference>
<dbReference type="InterPro" id="IPR028417">
    <property type="entry name" value="CAP_CS_C"/>
</dbReference>
<dbReference type="InterPro" id="IPR018106">
    <property type="entry name" value="CAP_CS_N"/>
</dbReference>
<dbReference type="InterPro" id="IPR053950">
    <property type="entry name" value="CAP_N"/>
</dbReference>
<dbReference type="InterPro" id="IPR036222">
    <property type="entry name" value="CAP_N_sf"/>
</dbReference>
<dbReference type="InterPro" id="IPR006599">
    <property type="entry name" value="CARP_motif"/>
</dbReference>
<dbReference type="PANTHER" id="PTHR10652">
    <property type="entry name" value="ADENYLYL CYCLASE-ASSOCIATED PROTEIN"/>
    <property type="match status" value="1"/>
</dbReference>
<dbReference type="PANTHER" id="PTHR10652:SF1">
    <property type="entry name" value="ADENYLYL CYCLASE-ASSOCIATED PROTEIN 1"/>
    <property type="match status" value="1"/>
</dbReference>
<dbReference type="Pfam" id="PF08603">
    <property type="entry name" value="CAP_C"/>
    <property type="match status" value="1"/>
</dbReference>
<dbReference type="Pfam" id="PF21938">
    <property type="entry name" value="CAP_N"/>
    <property type="match status" value="1"/>
</dbReference>
<dbReference type="Pfam" id="PF01213">
    <property type="entry name" value="CAP_N-CM"/>
    <property type="match status" value="1"/>
</dbReference>
<dbReference type="SMART" id="SM00673">
    <property type="entry name" value="CARP"/>
    <property type="match status" value="2"/>
</dbReference>
<dbReference type="SUPFAM" id="SSF69340">
    <property type="entry name" value="C-terminal domain of adenylylcyclase associated protein"/>
    <property type="match status" value="1"/>
</dbReference>
<dbReference type="SUPFAM" id="SSF101278">
    <property type="entry name" value="N-terminal domain of adenylylcyclase associated protein, CAP"/>
    <property type="match status" value="1"/>
</dbReference>
<dbReference type="PROSITE" id="PS51329">
    <property type="entry name" value="C_CAP_COFACTOR_C"/>
    <property type="match status" value="1"/>
</dbReference>
<dbReference type="PROSITE" id="PS01088">
    <property type="entry name" value="CAP_1"/>
    <property type="match status" value="1"/>
</dbReference>
<dbReference type="PROSITE" id="PS01089">
    <property type="entry name" value="CAP_2"/>
    <property type="match status" value="1"/>
</dbReference>
<organism>
    <name type="scientific">Pongo abelii</name>
    <name type="common">Sumatran orangutan</name>
    <name type="synonym">Pongo pygmaeus abelii</name>
    <dbReference type="NCBI Taxonomy" id="9601"/>
    <lineage>
        <taxon>Eukaryota</taxon>
        <taxon>Metazoa</taxon>
        <taxon>Chordata</taxon>
        <taxon>Craniata</taxon>
        <taxon>Vertebrata</taxon>
        <taxon>Euteleostomi</taxon>
        <taxon>Mammalia</taxon>
        <taxon>Eutheria</taxon>
        <taxon>Euarchontoglires</taxon>
        <taxon>Primates</taxon>
        <taxon>Haplorrhini</taxon>
        <taxon>Catarrhini</taxon>
        <taxon>Hominidae</taxon>
        <taxon>Pongo</taxon>
    </lineage>
</organism>
<accession>Q5R8B4</accession>
<sequence>MADMQNLVERLERAVGRLEAVSHTSDMHRGYGDSPSKAGAAPYVQVFDSLLAGPVAEYLKISKEIGGDVQKHAEMVHTGLKLERALLVTASQCQQPADNKLSDLLAPISEQIKEVITFREKNRGSKLFNHLSAVSESIQALGWVAMAPKPGPYVKEMNDAAMFYTNRVLKEYKDVDKKHVDWVKAYLSIWTELQAYIKEFHTTGLAWSKTGPVAKELSGLPSGPSAGSGPPPPPPGPPPPPVSTSSGSDESASRSALFAQINQGESITHALKHVSDDMKTHKNPALKAQSGPLRSGPKPFSAPKPQTSQSPKPATKKEPAVLELEGKKWRVENQENVSNLVIEDTELKQVAYIYKCVSTTLQIKGKINSITVDNCKKLGLVFDDVVGIVEIINSGDVKVQVMGKVPTISINKTDGCHAYLSKNSLDCEIVSAKSSEMNVLIPTEGGDFNEFPVPEQFKTLWNGQKLVTTVTEIAG</sequence>
<keyword id="KW-0007">Acetylation</keyword>
<keyword id="KW-0009">Actin-binding</keyword>
<keyword id="KW-1003">Cell membrane</keyword>
<keyword id="KW-1017">Isopeptide bond</keyword>
<keyword id="KW-0472">Membrane</keyword>
<keyword id="KW-0488">Methylation</keyword>
<keyword id="KW-0597">Phosphoprotein</keyword>
<keyword id="KW-1185">Reference proteome</keyword>
<keyword id="KW-0832">Ubl conjugation</keyword>
<gene>
    <name type="primary">CAP1</name>
</gene>
<reference key="1">
    <citation type="submission" date="2004-11" db="EMBL/GenBank/DDBJ databases">
        <authorList>
            <consortium name="The German cDNA consortium"/>
        </authorList>
    </citation>
    <scope>NUCLEOTIDE SEQUENCE [LARGE SCALE MRNA]</scope>
    <source>
        <tissue>Brain cortex</tissue>
    </source>
</reference>
<proteinExistence type="evidence at transcript level"/>
<protein>
    <recommendedName>
        <fullName>Adenylyl cyclase-associated protein 1</fullName>
        <shortName>CAP 1</shortName>
    </recommendedName>
</protein>
<feature type="initiator methionine" description="Removed" evidence="3">
    <location>
        <position position="1"/>
    </location>
</feature>
<feature type="chain" id="PRO_0000271435" description="Adenylyl cyclase-associated protein 1">
    <location>
        <begin position="2"/>
        <end position="475"/>
    </location>
</feature>
<feature type="domain" description="C-CAP/cofactor C-like" evidence="4">
    <location>
        <begin position="313"/>
        <end position="453"/>
    </location>
</feature>
<feature type="region of interest" description="Disordered" evidence="5">
    <location>
        <begin position="216"/>
        <end position="255"/>
    </location>
</feature>
<feature type="region of interest" description="Disordered" evidence="5">
    <location>
        <begin position="278"/>
        <end position="318"/>
    </location>
</feature>
<feature type="compositionally biased region" description="Low complexity" evidence="5">
    <location>
        <begin position="218"/>
        <end position="228"/>
    </location>
</feature>
<feature type="compositionally biased region" description="Pro residues" evidence="5">
    <location>
        <begin position="229"/>
        <end position="242"/>
    </location>
</feature>
<feature type="compositionally biased region" description="Low complexity" evidence="5">
    <location>
        <begin position="243"/>
        <end position="255"/>
    </location>
</feature>
<feature type="modified residue" description="N-acetylalanine" evidence="3">
    <location>
        <position position="2"/>
    </location>
</feature>
<feature type="modified residue" description="Phosphotyrosine" evidence="2">
    <location>
        <position position="31"/>
    </location>
</feature>
<feature type="modified residue" description="Phosphoserine" evidence="3">
    <location>
        <position position="34"/>
    </location>
</feature>
<feature type="modified residue" description="N6-acetyllysine" evidence="3">
    <location>
        <position position="81"/>
    </location>
</feature>
<feature type="modified residue" description="N6-methyllysine" evidence="3">
    <location>
        <position position="287"/>
    </location>
</feature>
<feature type="modified residue" description="Phosphoserine" evidence="3">
    <location>
        <position position="290"/>
    </location>
</feature>
<feature type="modified residue" description="Phosphoserine" evidence="3">
    <location>
        <position position="295"/>
    </location>
</feature>
<feature type="modified residue" description="Phosphoserine" evidence="3">
    <location>
        <position position="301"/>
    </location>
</feature>
<feature type="modified residue" description="Phosphothreonine" evidence="3">
    <location>
        <position position="307"/>
    </location>
</feature>
<feature type="modified residue" description="Phosphoserine" evidence="3">
    <location>
        <position position="308"/>
    </location>
</feature>
<feature type="modified residue" description="Phosphoserine" evidence="3">
    <location>
        <position position="310"/>
    </location>
</feature>
<feature type="cross-link" description="Glycyl lysine isopeptide (Lys-Gly) (interchain with G-Cter in SUMO1)" evidence="3">
    <location>
        <position position="348"/>
    </location>
</feature>